<dbReference type="EC" id="3.1.26.11" evidence="1"/>
<dbReference type="EMBL" id="CP001056">
    <property type="protein sequence ID" value="ACD23519.1"/>
    <property type="molecule type" value="Genomic_DNA"/>
</dbReference>
<dbReference type="SMR" id="B2TN28"/>
<dbReference type="KEGG" id="cbk:CLL_A1059"/>
<dbReference type="PATRIC" id="fig|935198.13.peg.1008"/>
<dbReference type="HOGENOM" id="CLU_031317_2_1_9"/>
<dbReference type="Proteomes" id="UP000001195">
    <property type="component" value="Chromosome"/>
</dbReference>
<dbReference type="GO" id="GO:0042781">
    <property type="term" value="F:3'-tRNA processing endoribonuclease activity"/>
    <property type="evidence" value="ECO:0007669"/>
    <property type="project" value="UniProtKB-UniRule"/>
</dbReference>
<dbReference type="GO" id="GO:0008270">
    <property type="term" value="F:zinc ion binding"/>
    <property type="evidence" value="ECO:0007669"/>
    <property type="project" value="UniProtKB-UniRule"/>
</dbReference>
<dbReference type="CDD" id="cd07717">
    <property type="entry name" value="RNaseZ_ZiPD-like_MBL-fold"/>
    <property type="match status" value="1"/>
</dbReference>
<dbReference type="Gene3D" id="3.60.15.10">
    <property type="entry name" value="Ribonuclease Z/Hydroxyacylglutathione hydrolase-like"/>
    <property type="match status" value="1"/>
</dbReference>
<dbReference type="HAMAP" id="MF_01818">
    <property type="entry name" value="RNase_Z_BN"/>
    <property type="match status" value="1"/>
</dbReference>
<dbReference type="InterPro" id="IPR001279">
    <property type="entry name" value="Metallo-B-lactamas"/>
</dbReference>
<dbReference type="InterPro" id="IPR036866">
    <property type="entry name" value="RibonucZ/Hydroxyglut_hydro"/>
</dbReference>
<dbReference type="InterPro" id="IPR013471">
    <property type="entry name" value="RNase_Z/BN"/>
</dbReference>
<dbReference type="NCBIfam" id="NF000801">
    <property type="entry name" value="PRK00055.1-3"/>
    <property type="match status" value="1"/>
</dbReference>
<dbReference type="NCBIfam" id="TIGR02651">
    <property type="entry name" value="RNase_Z"/>
    <property type="match status" value="1"/>
</dbReference>
<dbReference type="PANTHER" id="PTHR46018">
    <property type="entry name" value="ZINC PHOSPHODIESTERASE ELAC PROTEIN 1"/>
    <property type="match status" value="1"/>
</dbReference>
<dbReference type="PANTHER" id="PTHR46018:SF2">
    <property type="entry name" value="ZINC PHOSPHODIESTERASE ELAC PROTEIN 1"/>
    <property type="match status" value="1"/>
</dbReference>
<dbReference type="Pfam" id="PF00753">
    <property type="entry name" value="Lactamase_B"/>
    <property type="match status" value="1"/>
</dbReference>
<dbReference type="SUPFAM" id="SSF56281">
    <property type="entry name" value="Metallo-hydrolase/oxidoreductase"/>
    <property type="match status" value="1"/>
</dbReference>
<evidence type="ECO:0000255" key="1">
    <source>
        <dbReference type="HAMAP-Rule" id="MF_01818"/>
    </source>
</evidence>
<reference key="1">
    <citation type="submission" date="2008-04" db="EMBL/GenBank/DDBJ databases">
        <title>Complete sequence of Clostridium botulinum strain Eklund.</title>
        <authorList>
            <person name="Brinkac L.M."/>
            <person name="Brown J.L."/>
            <person name="Bruce D."/>
            <person name="Detter C."/>
            <person name="Munk C."/>
            <person name="Smith L.A."/>
            <person name="Smith T.J."/>
            <person name="Sutton G."/>
            <person name="Brettin T.S."/>
        </authorList>
    </citation>
    <scope>NUCLEOTIDE SEQUENCE [LARGE SCALE GENOMIC DNA]</scope>
    <source>
        <strain>Eklund 17B / Type B</strain>
    </source>
</reference>
<organism>
    <name type="scientific">Clostridium botulinum (strain Eklund 17B / Type B)</name>
    <dbReference type="NCBI Taxonomy" id="935198"/>
    <lineage>
        <taxon>Bacteria</taxon>
        <taxon>Bacillati</taxon>
        <taxon>Bacillota</taxon>
        <taxon>Clostridia</taxon>
        <taxon>Eubacteriales</taxon>
        <taxon>Clostridiaceae</taxon>
        <taxon>Clostridium</taxon>
    </lineage>
</organism>
<keyword id="KW-0255">Endonuclease</keyword>
<keyword id="KW-0378">Hydrolase</keyword>
<keyword id="KW-0479">Metal-binding</keyword>
<keyword id="KW-0540">Nuclease</keyword>
<keyword id="KW-0819">tRNA processing</keyword>
<keyword id="KW-0862">Zinc</keyword>
<gene>
    <name evidence="1" type="primary">rnz</name>
    <name type="ordered locus">CLL_A1059</name>
</gene>
<feature type="chain" id="PRO_1000187946" description="Ribonuclease Z">
    <location>
        <begin position="1"/>
        <end position="315"/>
    </location>
</feature>
<feature type="active site" description="Proton acceptor" evidence="1">
    <location>
        <position position="65"/>
    </location>
</feature>
<feature type="binding site" evidence="1">
    <location>
        <position position="61"/>
    </location>
    <ligand>
        <name>Zn(2+)</name>
        <dbReference type="ChEBI" id="CHEBI:29105"/>
        <label>1</label>
        <note>catalytic</note>
    </ligand>
</feature>
<feature type="binding site" evidence="1">
    <location>
        <position position="63"/>
    </location>
    <ligand>
        <name>Zn(2+)</name>
        <dbReference type="ChEBI" id="CHEBI:29105"/>
        <label>1</label>
        <note>catalytic</note>
    </ligand>
</feature>
<feature type="binding site" evidence="1">
    <location>
        <position position="65"/>
    </location>
    <ligand>
        <name>Zn(2+)</name>
        <dbReference type="ChEBI" id="CHEBI:29105"/>
        <label>2</label>
        <note>catalytic</note>
    </ligand>
</feature>
<feature type="binding site" evidence="1">
    <location>
        <position position="66"/>
    </location>
    <ligand>
        <name>Zn(2+)</name>
        <dbReference type="ChEBI" id="CHEBI:29105"/>
        <label>2</label>
        <note>catalytic</note>
    </ligand>
</feature>
<feature type="binding site" evidence="1">
    <location>
        <position position="151"/>
    </location>
    <ligand>
        <name>Zn(2+)</name>
        <dbReference type="ChEBI" id="CHEBI:29105"/>
        <label>1</label>
        <note>catalytic</note>
    </ligand>
</feature>
<feature type="binding site" evidence="1">
    <location>
        <position position="219"/>
    </location>
    <ligand>
        <name>Zn(2+)</name>
        <dbReference type="ChEBI" id="CHEBI:29105"/>
        <label>1</label>
        <note>catalytic</note>
    </ligand>
</feature>
<feature type="binding site" evidence="1">
    <location>
        <position position="219"/>
    </location>
    <ligand>
        <name>Zn(2+)</name>
        <dbReference type="ChEBI" id="CHEBI:29105"/>
        <label>2</label>
        <note>catalytic</note>
    </ligand>
</feature>
<feature type="binding site" evidence="1">
    <location>
        <position position="278"/>
    </location>
    <ligand>
        <name>Zn(2+)</name>
        <dbReference type="ChEBI" id="CHEBI:29105"/>
        <label>2</label>
        <note>catalytic</note>
    </ligand>
</feature>
<accession>B2TN28</accession>
<proteinExistence type="inferred from homology"/>
<name>RNZ_CLOBB</name>
<protein>
    <recommendedName>
        <fullName evidence="1">Ribonuclease Z</fullName>
        <shortName evidence="1">RNase Z</shortName>
        <ecNumber evidence="1">3.1.26.11</ecNumber>
    </recommendedName>
    <alternativeName>
        <fullName evidence="1">tRNA 3 endonuclease</fullName>
    </alternativeName>
    <alternativeName>
        <fullName evidence="1">tRNase Z</fullName>
    </alternativeName>
</protein>
<sequence>MIDLCVLGTTGGMPMVDKYLSATLININGRKILIDCGEGTQVAMRKIGWGFKSVDLICITHSHGDHTIGLPGLISIMGNSGRTEKVTVVGPKGIKEIVNGLNVINPYLPYELEIIELENNDLKFIIDKNNMSLCEDNNKCNLILSSLEVEHSAKCLSYSFYIKRRPRFSVEKASKNNVPKPLWSKLQNQEIINYDNKIYTPDLVLDNARKGIKISYVTDTRPISAIPEFIKYSDLFICEGTYGSDEDIDKAIKNKHMTFRESATLALNGECKELILTHFSPALSEPESFVDNAKQVFHNSSVAYDGLIKTLKFID</sequence>
<comment type="function">
    <text evidence="1">Zinc phosphodiesterase, which displays some tRNA 3'-processing endonuclease activity. Probably involved in tRNA maturation, by removing a 3'-trailer from precursor tRNA.</text>
</comment>
<comment type="catalytic activity">
    <reaction evidence="1">
        <text>Endonucleolytic cleavage of RNA, removing extra 3' nucleotides from tRNA precursor, generating 3' termini of tRNAs. A 3'-hydroxy group is left at the tRNA terminus and a 5'-phosphoryl group is left at the trailer molecule.</text>
        <dbReference type="EC" id="3.1.26.11"/>
    </reaction>
</comment>
<comment type="cofactor">
    <cofactor evidence="1">
        <name>Zn(2+)</name>
        <dbReference type="ChEBI" id="CHEBI:29105"/>
    </cofactor>
    <text evidence="1">Binds 2 Zn(2+) ions.</text>
</comment>
<comment type="subunit">
    <text evidence="1">Homodimer.</text>
</comment>
<comment type="similarity">
    <text evidence="1">Belongs to the RNase Z family.</text>
</comment>